<evidence type="ECO:0000250" key="1"/>
<evidence type="ECO:0000250" key="2">
    <source>
        <dbReference type="UniProtKB" id="Q9H5V7"/>
    </source>
</evidence>
<evidence type="ECO:0000255" key="3">
    <source>
        <dbReference type="PROSITE-ProRule" id="PRU00042"/>
    </source>
</evidence>
<evidence type="ECO:0000256" key="4">
    <source>
        <dbReference type="SAM" id="MobiDB-lite"/>
    </source>
</evidence>
<evidence type="ECO:0000303" key="5">
    <source ref="1"/>
</evidence>
<evidence type="ECO:0000303" key="6">
    <source ref="2"/>
</evidence>
<evidence type="ECO:0000305" key="7"/>
<accession>A0JPB4</accession>
<accession>Q28DX8</accession>
<protein>
    <recommendedName>
        <fullName>Zinc finger protein Pegasus</fullName>
    </recommendedName>
    <alternativeName>
        <fullName>Ikaros family zinc finger protein 5</fullName>
    </alternativeName>
</protein>
<sequence>MGEKKPETLDFVKDFQEYLTQQTHHVNMISGSVSSDKEAETLQGAGTDSDQNGLDHPSVEVSLDESAGMLVDGFERTFDGKLKCRYCNYASKGTARLIEHIRIHTGEKPHRCHLCPFASAYERHLEAHMRSHTGEKPYKCELCSFRCSDRSNLSHHRRRKHKMLPIKGTRPSLGNKKMWGVLQKKVSSLGYTRRTLINLSPPSMVVHKPDYLSDFAHEIPSIQSEAYESLAKASHSGVLSRDPQELMVDNPLNQLSTLAGQLSSLPPDTQNPASPDTGPCPDEKPFMIQQPPPPACASAVSTSVAQSSSPASPEGRPTHNHRNCSPMAGPSSERSGRTSTPSISNSQPSTPAPALPAQDPQLLHHCQHCDMYFADNILYTIHMGCHGFENPFQCNICGCKCKNKYDFACHFARGACCQHASRCAFRRTDDHVAK</sequence>
<proteinExistence type="evidence at transcript level"/>
<comment type="function">
    <text evidence="2">Transcriptional repressor that binds the core 5'GNNTGTNG-3' DNA consensus sequence (By similarity).</text>
</comment>
<comment type="subunit">
    <text evidence="1">Probably self-associates.</text>
</comment>
<comment type="subcellular location">
    <subcellularLocation>
        <location evidence="2">Nucleus</location>
    </subcellularLocation>
</comment>
<comment type="alternative products">
    <event type="alternative splicing"/>
    <isoform>
        <id>A0JPB4-1</id>
        <name>1</name>
        <sequence type="displayed"/>
    </isoform>
    <isoform>
        <id>A0JPB4-2</id>
        <name>2</name>
        <sequence type="described" ref="VSP_027695 VSP_027696"/>
    </isoform>
</comment>
<comment type="miscellaneous">
    <text>'Pegasus' was the winged horse in Greek mythology.</text>
</comment>
<comment type="similarity">
    <text evidence="7">Belongs to the Ikaros C2H2-type zinc-finger protein family.</text>
</comment>
<organism>
    <name type="scientific">Xenopus tropicalis</name>
    <name type="common">Western clawed frog</name>
    <name type="synonym">Silurana tropicalis</name>
    <dbReference type="NCBI Taxonomy" id="8364"/>
    <lineage>
        <taxon>Eukaryota</taxon>
        <taxon>Metazoa</taxon>
        <taxon>Chordata</taxon>
        <taxon>Craniata</taxon>
        <taxon>Vertebrata</taxon>
        <taxon>Euteleostomi</taxon>
        <taxon>Amphibia</taxon>
        <taxon>Batrachia</taxon>
        <taxon>Anura</taxon>
        <taxon>Pipoidea</taxon>
        <taxon>Pipidae</taxon>
        <taxon>Xenopodinae</taxon>
        <taxon>Xenopus</taxon>
        <taxon>Silurana</taxon>
    </lineage>
</organism>
<gene>
    <name type="primary">ikzf5</name>
    <name type="ORF">TEgg054g02.1</name>
</gene>
<dbReference type="EMBL" id="CR848546">
    <property type="protein sequence ID" value="CAJ81303.1"/>
    <property type="molecule type" value="mRNA"/>
</dbReference>
<dbReference type="EMBL" id="BC127339">
    <property type="protein sequence ID" value="AAI27340.1"/>
    <property type="molecule type" value="mRNA"/>
</dbReference>
<dbReference type="RefSeq" id="NP_001017355.1">
    <property type="nucleotide sequence ID" value="NM_001017355.2"/>
</dbReference>
<dbReference type="RefSeq" id="XP_012822119.1">
    <molecule id="A0JPB4-1"/>
    <property type="nucleotide sequence ID" value="XM_012966665.3"/>
</dbReference>
<dbReference type="FunCoup" id="A0JPB4">
    <property type="interactions" value="1924"/>
</dbReference>
<dbReference type="STRING" id="8364.ENSXETP00000040089"/>
<dbReference type="PaxDb" id="8364-ENSXETP00000021087"/>
<dbReference type="GeneID" id="550109"/>
<dbReference type="KEGG" id="xtr:550109"/>
<dbReference type="AGR" id="Xenbase:XB-GENE-978531"/>
<dbReference type="CTD" id="64376"/>
<dbReference type="Xenbase" id="XB-GENE-978531">
    <property type="gene designation" value="ikzf5"/>
</dbReference>
<dbReference type="eggNOG" id="KOG1721">
    <property type="taxonomic scope" value="Eukaryota"/>
</dbReference>
<dbReference type="HOGENOM" id="CLU_734778_0_0_1"/>
<dbReference type="InParanoid" id="A0JPB4"/>
<dbReference type="OrthoDB" id="5576026at2759"/>
<dbReference type="Proteomes" id="UP000008143">
    <property type="component" value="Chromosome 7"/>
</dbReference>
<dbReference type="Bgee" id="ENSXETG00000009559">
    <property type="expression patterns" value="Expressed in 2-cell stage embryo and 12 other cell types or tissues"/>
</dbReference>
<dbReference type="GO" id="GO:0005634">
    <property type="term" value="C:nucleus"/>
    <property type="evidence" value="ECO:0000250"/>
    <property type="project" value="UniProtKB"/>
</dbReference>
<dbReference type="GO" id="GO:0003682">
    <property type="term" value="F:chromatin binding"/>
    <property type="evidence" value="ECO:0000250"/>
    <property type="project" value="UniProtKB"/>
</dbReference>
<dbReference type="GO" id="GO:0003677">
    <property type="term" value="F:DNA binding"/>
    <property type="evidence" value="ECO:0007669"/>
    <property type="project" value="UniProtKB-KW"/>
</dbReference>
<dbReference type="GO" id="GO:0008270">
    <property type="term" value="F:zinc ion binding"/>
    <property type="evidence" value="ECO:0007669"/>
    <property type="project" value="UniProtKB-KW"/>
</dbReference>
<dbReference type="FunFam" id="3.30.160.60:FF:000402">
    <property type="entry name" value="IKAROS family zinc finger 5"/>
    <property type="match status" value="1"/>
</dbReference>
<dbReference type="FunFam" id="3.30.160.60:FF:000924">
    <property type="entry name" value="IKAROS family zinc finger 5"/>
    <property type="match status" value="1"/>
</dbReference>
<dbReference type="FunFam" id="3.30.160.60:FF:001097">
    <property type="entry name" value="IKAROS family zinc finger 5"/>
    <property type="match status" value="1"/>
</dbReference>
<dbReference type="Gene3D" id="3.30.160.60">
    <property type="entry name" value="Classic Zinc Finger"/>
    <property type="match status" value="4"/>
</dbReference>
<dbReference type="InterPro" id="IPR050589">
    <property type="entry name" value="Ikaros_C2H2-ZF"/>
</dbReference>
<dbReference type="InterPro" id="IPR036236">
    <property type="entry name" value="Znf_C2H2_sf"/>
</dbReference>
<dbReference type="InterPro" id="IPR013087">
    <property type="entry name" value="Znf_C2H2_type"/>
</dbReference>
<dbReference type="PANTHER" id="PTHR24404">
    <property type="entry name" value="ZINC FINGER PROTEIN"/>
    <property type="match status" value="1"/>
</dbReference>
<dbReference type="PANTHER" id="PTHR24404:SF55">
    <property type="entry name" value="ZINC FINGER PROTEIN PEGASUS"/>
    <property type="match status" value="1"/>
</dbReference>
<dbReference type="SMART" id="SM00355">
    <property type="entry name" value="ZnF_C2H2"/>
    <property type="match status" value="5"/>
</dbReference>
<dbReference type="SUPFAM" id="SSF57667">
    <property type="entry name" value="beta-beta-alpha zinc fingers"/>
    <property type="match status" value="3"/>
</dbReference>
<dbReference type="PROSITE" id="PS00028">
    <property type="entry name" value="ZINC_FINGER_C2H2_1"/>
    <property type="match status" value="2"/>
</dbReference>
<dbReference type="PROSITE" id="PS50157">
    <property type="entry name" value="ZINC_FINGER_C2H2_2"/>
    <property type="match status" value="3"/>
</dbReference>
<keyword id="KW-0025">Alternative splicing</keyword>
<keyword id="KW-0238">DNA-binding</keyword>
<keyword id="KW-0479">Metal-binding</keyword>
<keyword id="KW-0539">Nucleus</keyword>
<keyword id="KW-1185">Reference proteome</keyword>
<keyword id="KW-0677">Repeat</keyword>
<keyword id="KW-0678">Repressor</keyword>
<keyword id="KW-0804">Transcription</keyword>
<keyword id="KW-0805">Transcription regulation</keyword>
<keyword id="KW-0862">Zinc</keyword>
<keyword id="KW-0863">Zinc-finger</keyword>
<name>IKZF5_XENTR</name>
<feature type="chain" id="PRO_0000299477" description="Zinc finger protein Pegasus">
    <location>
        <begin position="1"/>
        <end position="434"/>
    </location>
</feature>
<feature type="zinc finger region" description="C2H2-type 1" evidence="3">
    <location>
        <begin position="82"/>
        <end position="104"/>
    </location>
</feature>
<feature type="zinc finger region" description="C2H2-type 2" evidence="3">
    <location>
        <begin position="110"/>
        <end position="132"/>
    </location>
</feature>
<feature type="zinc finger region" description="C2H2-type 3" evidence="3">
    <location>
        <begin position="138"/>
        <end position="161"/>
    </location>
</feature>
<feature type="zinc finger region" description="C2H2-type 4" evidence="3">
    <location>
        <begin position="364"/>
        <end position="386"/>
    </location>
</feature>
<feature type="zinc finger region" description="C2H2-type 5" evidence="3">
    <location>
        <begin position="392"/>
        <end position="419"/>
    </location>
</feature>
<feature type="region of interest" description="Disordered" evidence="4">
    <location>
        <begin position="33"/>
        <end position="57"/>
    </location>
</feature>
<feature type="region of interest" description="Disordered" evidence="4">
    <location>
        <begin position="260"/>
        <end position="357"/>
    </location>
</feature>
<feature type="compositionally biased region" description="Polar residues" evidence="4">
    <location>
        <begin position="260"/>
        <end position="274"/>
    </location>
</feature>
<feature type="compositionally biased region" description="Low complexity" evidence="4">
    <location>
        <begin position="296"/>
        <end position="313"/>
    </location>
</feature>
<feature type="compositionally biased region" description="Polar residues" evidence="4">
    <location>
        <begin position="337"/>
        <end position="349"/>
    </location>
</feature>
<feature type="splice variant" id="VSP_027695" description="In isoform 2." evidence="5 6">
    <original>G</original>
    <variation>GGTQNHDALSANSPCLALPA</variation>
    <location>
        <position position="44"/>
    </location>
</feature>
<feature type="splice variant" id="VSP_027696" description="In isoform 2." evidence="5 6">
    <original>ACCQHASRCAFRRTDDHVAK</original>
    <variation>ARGQHTQH</variation>
    <location>
        <begin position="415"/>
        <end position="434"/>
    </location>
</feature>
<reference key="1">
    <citation type="submission" date="2006-10" db="EMBL/GenBank/DDBJ databases">
        <authorList>
            <consortium name="Sanger Xenopus tropicalis EST/cDNA project"/>
        </authorList>
    </citation>
    <scope>NUCLEOTIDE SEQUENCE [LARGE SCALE MRNA] (ISOFORM 2)</scope>
    <source>
        <tissue>Egg</tissue>
    </source>
</reference>
<reference key="2">
    <citation type="submission" date="2006-11" db="EMBL/GenBank/DDBJ databases">
        <authorList>
            <consortium name="NIH - Xenopus Gene Collection (XGC) project"/>
        </authorList>
    </citation>
    <scope>NUCLEOTIDE SEQUENCE [LARGE SCALE MRNA] (ISOFORM 2)</scope>
    <source>
        <strain>N6</strain>
        <tissue>Oviduct</tissue>
    </source>
</reference>